<reference key="1">
    <citation type="journal article" date="2005" name="Biochem. Biophys. Res. Commun.">
        <title>Molecular cloning and characterization of a novel Gq-coupled orphan receptor GPRg1 exclusively expressed in the central nervous system.</title>
        <authorList>
            <person name="Matsuo A."/>
            <person name="Matsumoto S."/>
            <person name="Nagano M."/>
            <person name="Masumoto K.H."/>
            <person name="Takasaki J."/>
            <person name="Matsumoto M."/>
            <person name="Kobori M."/>
            <person name="Katoh M."/>
            <person name="Shigeyoshi Y."/>
        </authorList>
    </citation>
    <scope>NUCLEOTIDE SEQUENCE [MRNA]</scope>
    <scope>TISSUE SPECIFICITY</scope>
</reference>
<reference key="2">
    <citation type="journal article" date="2004" name="Genome Res.">
        <title>The status, quality, and expansion of the NIH full-length cDNA project: the Mammalian Gene Collection (MGC).</title>
        <authorList>
            <consortium name="The MGC Project Team"/>
        </authorList>
    </citation>
    <scope>NUCLEOTIDE SEQUENCE [LARGE SCALE MRNA]</scope>
    <source>
        <tissue>Brain</tissue>
    </source>
</reference>
<reference key="3">
    <citation type="journal article" date="2003" name="Proc. Natl. Acad. Sci. U.S.A.">
        <title>The G protein-coupled receptor repertoires of human and mouse.</title>
        <authorList>
            <person name="Vassilatis D.K."/>
            <person name="Hohmann J.G."/>
            <person name="Zeng H."/>
            <person name="Li F."/>
            <person name="Ranchalis J.E."/>
            <person name="Mortrud M.T."/>
            <person name="Brown A."/>
            <person name="Rodriguez S.S."/>
            <person name="Weller J.R."/>
            <person name="Wright A.C."/>
            <person name="Bergmann J.E."/>
            <person name="Gaitanaris G.A."/>
        </authorList>
    </citation>
    <scope>NUCLEOTIDE SEQUENCE [MRNA] OF 218-271</scope>
</reference>
<keyword id="KW-1003">Cell membrane</keyword>
<keyword id="KW-0297">G-protein coupled receptor</keyword>
<keyword id="KW-0325">Glycoprotein</keyword>
<keyword id="KW-0472">Membrane</keyword>
<keyword id="KW-0675">Receptor</keyword>
<keyword id="KW-1185">Reference proteome</keyword>
<keyword id="KW-0807">Transducer</keyword>
<keyword id="KW-0812">Transmembrane</keyword>
<keyword id="KW-1133">Transmembrane helix</keyword>
<protein>
    <recommendedName>
        <fullName>Probable G-protein coupled receptor 139</fullName>
    </recommendedName>
    <alternativeName>
        <fullName>G(q)-coupled orphan receptor GPRg1</fullName>
    </alternativeName>
    <alternativeName>
        <fullName>G-protein-coupled receptor PGR3</fullName>
    </alternativeName>
</protein>
<dbReference type="EMBL" id="AB196532">
    <property type="protein sequence ID" value="BAD97443.1"/>
    <property type="molecule type" value="mRNA"/>
</dbReference>
<dbReference type="EMBL" id="BC125496">
    <property type="protein sequence ID" value="AAI25497.1"/>
    <property type="molecule type" value="mRNA"/>
</dbReference>
<dbReference type="EMBL" id="BC125498">
    <property type="protein sequence ID" value="AAI25499.1"/>
    <property type="molecule type" value="mRNA"/>
</dbReference>
<dbReference type="EMBL" id="AY255548">
    <property type="protein sequence ID" value="AAO85060.1"/>
    <property type="molecule type" value="mRNA"/>
</dbReference>
<dbReference type="CCDS" id="CCDS21778.1"/>
<dbReference type="RefSeq" id="NP_001019309.1">
    <property type="nucleotide sequence ID" value="NM_001024138.2"/>
</dbReference>
<dbReference type="SMR" id="Q80UC8"/>
<dbReference type="FunCoup" id="Q80UC8">
    <property type="interactions" value="794"/>
</dbReference>
<dbReference type="STRING" id="10090.ENSMUSP00000081700"/>
<dbReference type="GlyCosmos" id="Q80UC8">
    <property type="glycosylation" value="1 site, No reported glycans"/>
</dbReference>
<dbReference type="GlyGen" id="Q80UC8">
    <property type="glycosylation" value="1 site"/>
</dbReference>
<dbReference type="PhosphoSitePlus" id="Q80UC8"/>
<dbReference type="PaxDb" id="10090-ENSMUSP00000081700"/>
<dbReference type="Antibodypedia" id="12144">
    <property type="antibodies" value="149 antibodies from 30 providers"/>
</dbReference>
<dbReference type="DNASU" id="209776"/>
<dbReference type="Ensembl" id="ENSMUST00000084650.6">
    <property type="protein sequence ID" value="ENSMUSP00000081700.5"/>
    <property type="gene ID" value="ENSMUSG00000066197.6"/>
</dbReference>
<dbReference type="GeneID" id="209776"/>
<dbReference type="KEGG" id="mmu:209776"/>
<dbReference type="UCSC" id="uc009jky.1">
    <property type="organism name" value="mouse"/>
</dbReference>
<dbReference type="AGR" id="MGI:2685341"/>
<dbReference type="CTD" id="124274"/>
<dbReference type="MGI" id="MGI:2685341">
    <property type="gene designation" value="Gpr139"/>
</dbReference>
<dbReference type="VEuPathDB" id="HostDB:ENSMUSG00000066197"/>
<dbReference type="eggNOG" id="KOG3656">
    <property type="taxonomic scope" value="Eukaryota"/>
</dbReference>
<dbReference type="GeneTree" id="ENSGT00940000159473"/>
<dbReference type="HOGENOM" id="CLU_009579_24_1_1"/>
<dbReference type="InParanoid" id="Q80UC8"/>
<dbReference type="OMA" id="WLVHIVS"/>
<dbReference type="OrthoDB" id="5864054at2759"/>
<dbReference type="PhylomeDB" id="Q80UC8"/>
<dbReference type="TreeFam" id="TF334275"/>
<dbReference type="BioGRID-ORCS" id="209776">
    <property type="hits" value="1 hit in 75 CRISPR screens"/>
</dbReference>
<dbReference type="PRO" id="PR:Q80UC8"/>
<dbReference type="Proteomes" id="UP000000589">
    <property type="component" value="Chromosome 7"/>
</dbReference>
<dbReference type="RNAct" id="Q80UC8">
    <property type="molecule type" value="protein"/>
</dbReference>
<dbReference type="Bgee" id="ENSMUSG00000066197">
    <property type="expression patterns" value="Expressed in lumbar dorsal root ganglion and 45 other cell types or tissues"/>
</dbReference>
<dbReference type="ExpressionAtlas" id="Q80UC8">
    <property type="expression patterns" value="baseline and differential"/>
</dbReference>
<dbReference type="GO" id="GO:0005886">
    <property type="term" value="C:plasma membrane"/>
    <property type="evidence" value="ECO:0000305"/>
    <property type="project" value="MGI"/>
</dbReference>
<dbReference type="GO" id="GO:0004930">
    <property type="term" value="F:G protein-coupled receptor activity"/>
    <property type="evidence" value="ECO:0000314"/>
    <property type="project" value="MGI"/>
</dbReference>
<dbReference type="GO" id="GO:0042802">
    <property type="term" value="F:identical protein binding"/>
    <property type="evidence" value="ECO:0000353"/>
    <property type="project" value="MGI"/>
</dbReference>
<dbReference type="GO" id="GO:0008188">
    <property type="term" value="F:neuropeptide receptor activity"/>
    <property type="evidence" value="ECO:0000314"/>
    <property type="project" value="MGI"/>
</dbReference>
<dbReference type="GO" id="GO:0007186">
    <property type="term" value="P:G protein-coupled receptor signaling pathway"/>
    <property type="evidence" value="ECO:0000314"/>
    <property type="project" value="MGI"/>
</dbReference>
<dbReference type="GO" id="GO:0007200">
    <property type="term" value="P:phospholipase C-activating G protein-coupled receptor signaling pathway"/>
    <property type="evidence" value="ECO:0000314"/>
    <property type="project" value="MGI"/>
</dbReference>
<dbReference type="CDD" id="cd15919">
    <property type="entry name" value="7tmA_GPR139"/>
    <property type="match status" value="1"/>
</dbReference>
<dbReference type="FunFam" id="1.20.1070.10:FF:000126">
    <property type="entry name" value="Probable G-protein coupled receptor 139"/>
    <property type="match status" value="1"/>
</dbReference>
<dbReference type="Gene3D" id="1.20.1070.10">
    <property type="entry name" value="Rhodopsin 7-helix transmembrane proteins"/>
    <property type="match status" value="1"/>
</dbReference>
<dbReference type="InterPro" id="IPR000276">
    <property type="entry name" value="GPCR_Rhodpsn"/>
</dbReference>
<dbReference type="InterPro" id="IPR017452">
    <property type="entry name" value="GPCR_Rhodpsn_7TM"/>
</dbReference>
<dbReference type="InterPro" id="IPR037486">
    <property type="entry name" value="GPR139"/>
</dbReference>
<dbReference type="InterPro" id="IPR052477">
    <property type="entry name" value="Orphan_GPCR1"/>
</dbReference>
<dbReference type="PANTHER" id="PTHR46272:SF3">
    <property type="entry name" value="G-PROTEIN COUPLED RECEPTOR 139-RELATED"/>
    <property type="match status" value="1"/>
</dbReference>
<dbReference type="PANTHER" id="PTHR46272">
    <property type="entry name" value="G_PROTEIN_RECEP_F1_2 DOMAIN-CONTAINING PROTEIN"/>
    <property type="match status" value="1"/>
</dbReference>
<dbReference type="Pfam" id="PF00001">
    <property type="entry name" value="7tm_1"/>
    <property type="match status" value="1"/>
</dbReference>
<dbReference type="PRINTS" id="PR00237">
    <property type="entry name" value="GPCRRHODOPSN"/>
</dbReference>
<dbReference type="SUPFAM" id="SSF81321">
    <property type="entry name" value="Family A G protein-coupled receptor-like"/>
    <property type="match status" value="1"/>
</dbReference>
<dbReference type="PROSITE" id="PS50262">
    <property type="entry name" value="G_PROTEIN_RECEP_F1_2"/>
    <property type="match status" value="1"/>
</dbReference>
<accession>Q80UC8</accession>
<accession>Q059X1</accession>
<feature type="chain" id="PRO_0000069616" description="Probable G-protein coupled receptor 139">
    <location>
        <begin position="1"/>
        <end position="345"/>
    </location>
</feature>
<feature type="topological domain" description="Extracellular" evidence="1">
    <location>
        <begin position="1"/>
        <end position="21"/>
    </location>
</feature>
<feature type="transmembrane region" description="Helical; Name=1" evidence="1">
    <location>
        <begin position="22"/>
        <end position="42"/>
    </location>
</feature>
<feature type="topological domain" description="Cytoplasmic" evidence="1">
    <location>
        <begin position="43"/>
        <end position="57"/>
    </location>
</feature>
<feature type="transmembrane region" description="Helical; Name=2" evidence="1">
    <location>
        <begin position="58"/>
        <end position="78"/>
    </location>
</feature>
<feature type="topological domain" description="Extracellular" evidence="1">
    <location>
        <begin position="79"/>
        <end position="94"/>
    </location>
</feature>
<feature type="transmembrane region" description="Helical; Name=3" evidence="1">
    <location>
        <begin position="95"/>
        <end position="115"/>
    </location>
</feature>
<feature type="topological domain" description="Cytoplasmic" evidence="1">
    <location>
        <begin position="116"/>
        <end position="140"/>
    </location>
</feature>
<feature type="transmembrane region" description="Helical; Name=4" evidence="1">
    <location>
        <begin position="141"/>
        <end position="161"/>
    </location>
</feature>
<feature type="topological domain" description="Extracellular" evidence="1">
    <location>
        <begin position="162"/>
        <end position="173"/>
    </location>
</feature>
<feature type="transmembrane region" description="Helical; Name=5" evidence="1">
    <location>
        <begin position="174"/>
        <end position="194"/>
    </location>
</feature>
<feature type="topological domain" description="Cytoplasmic" evidence="1">
    <location>
        <begin position="195"/>
        <end position="220"/>
    </location>
</feature>
<feature type="transmembrane region" description="Helical; Name=6" evidence="1">
    <location>
        <begin position="221"/>
        <end position="241"/>
    </location>
</feature>
<feature type="topological domain" description="Extracellular" evidence="1">
    <location>
        <begin position="242"/>
        <end position="260"/>
    </location>
</feature>
<feature type="transmembrane region" description="Helical; Name=7" evidence="1">
    <location>
        <begin position="261"/>
        <end position="281"/>
    </location>
</feature>
<feature type="topological domain" description="Cytoplasmic" evidence="1">
    <location>
        <begin position="282"/>
        <end position="345"/>
    </location>
</feature>
<feature type="glycosylation site" description="N-linked (GlcNAc...) asparagine" evidence="1">
    <location>
        <position position="11"/>
    </location>
</feature>
<evidence type="ECO:0000255" key="1"/>
<evidence type="ECO:0000255" key="2">
    <source>
        <dbReference type="PROSITE-ProRule" id="PRU00521"/>
    </source>
</evidence>
<evidence type="ECO:0000269" key="3">
    <source>
    </source>
</evidence>
<organism>
    <name type="scientific">Mus musculus</name>
    <name type="common">Mouse</name>
    <dbReference type="NCBI Taxonomy" id="10090"/>
    <lineage>
        <taxon>Eukaryota</taxon>
        <taxon>Metazoa</taxon>
        <taxon>Chordata</taxon>
        <taxon>Craniata</taxon>
        <taxon>Vertebrata</taxon>
        <taxon>Euteleostomi</taxon>
        <taxon>Mammalia</taxon>
        <taxon>Eutheria</taxon>
        <taxon>Euarchontoglires</taxon>
        <taxon>Glires</taxon>
        <taxon>Rodentia</taxon>
        <taxon>Myomorpha</taxon>
        <taxon>Muroidea</taxon>
        <taxon>Muridae</taxon>
        <taxon>Murinae</taxon>
        <taxon>Mus</taxon>
        <taxon>Mus</taxon>
    </lineage>
</organism>
<sequence>MEHTHAHLAANSSACGLGFVPVVYYSFLLCLGLPANILTVIILSQLVARRQKSSYNYLLALAAADILVLFFIVFVDFLLEDFILTMQMPLIPDKIIEVLEFSSIHTSIWITVPLTVDRYIAVCHPLKYHTVSYPARTRKVILSVYITCFLTSIPYYWWPNIWTEDYISTSMHHVLVWIHCFTVYLVPCSIFFILNSIIVYKLRRKSNFRLRGYSTGKTTAILFTITSIFATLWAPRIIMILYHLYGAPIQNPWLVHIMLDVANMLALLNTAINFFLYCFISKRFRTMAAATLKALFKCQKQPVQFYTNHNFSITSSPWISPANSHCIKMLVYQYDKHGKPIKVSP</sequence>
<comment type="function">
    <text>Orphan receptor. Seems to act through a G(q/11)-mediated pathway.</text>
</comment>
<comment type="subcellular location">
    <subcellularLocation>
        <location>Cell membrane</location>
        <topology>Multi-pass membrane protein</topology>
    </subcellularLocation>
</comment>
<comment type="tissue specificity">
    <text evidence="3">Expressed almost exclusively in the brain. Abundantly expressed in the ventrolateral region of caudate putamen, the habenular nucleus, the zona incerta, and the medial mammillary nucleus.</text>
</comment>
<comment type="similarity">
    <text evidence="2">Belongs to the G-protein coupled receptor 1 family.</text>
</comment>
<proteinExistence type="evidence at transcript level"/>
<gene>
    <name type="primary">Gpr139</name>
    <name type="synonym">Gm495</name>
    <name type="synonym">Gprg1</name>
    <name type="synonym">Pgr3</name>
</gene>
<name>GP139_MOUSE</name>